<proteinExistence type="inferred from homology"/>
<reference key="1">
    <citation type="submission" date="2009-05" db="EMBL/GenBank/DDBJ databases">
        <title>Complete sequence of Tolumonas auensis DSM 9187.</title>
        <authorList>
            <consortium name="US DOE Joint Genome Institute"/>
            <person name="Lucas S."/>
            <person name="Copeland A."/>
            <person name="Lapidus A."/>
            <person name="Glavina del Rio T."/>
            <person name="Tice H."/>
            <person name="Bruce D."/>
            <person name="Goodwin L."/>
            <person name="Pitluck S."/>
            <person name="Chertkov O."/>
            <person name="Brettin T."/>
            <person name="Detter J.C."/>
            <person name="Han C."/>
            <person name="Larimer F."/>
            <person name="Land M."/>
            <person name="Hauser L."/>
            <person name="Kyrpides N."/>
            <person name="Mikhailova N."/>
            <person name="Spring S."/>
            <person name="Beller H."/>
        </authorList>
    </citation>
    <scope>NUCLEOTIDE SEQUENCE [LARGE SCALE GENOMIC DNA]</scope>
    <source>
        <strain>DSM 9187 / NBRC 110442 / TA 4</strain>
    </source>
</reference>
<dbReference type="EMBL" id="CP001616">
    <property type="protein sequence ID" value="ACQ92163.1"/>
    <property type="molecule type" value="Genomic_DNA"/>
</dbReference>
<dbReference type="RefSeq" id="WP_012728762.1">
    <property type="nucleotide sequence ID" value="NC_012691.1"/>
</dbReference>
<dbReference type="SMR" id="C4LA34"/>
<dbReference type="STRING" id="595494.Tola_0534"/>
<dbReference type="KEGG" id="tau:Tola_0534"/>
<dbReference type="eggNOG" id="COG3024">
    <property type="taxonomic scope" value="Bacteria"/>
</dbReference>
<dbReference type="HOGENOM" id="CLU_178280_3_2_6"/>
<dbReference type="OrthoDB" id="9809663at2"/>
<dbReference type="Proteomes" id="UP000009073">
    <property type="component" value="Chromosome"/>
</dbReference>
<dbReference type="GO" id="GO:0008657">
    <property type="term" value="F:DNA topoisomerase type II (double strand cut, ATP-hydrolyzing) inhibitor activity"/>
    <property type="evidence" value="ECO:0007669"/>
    <property type="project" value="UniProtKB-UniRule"/>
</dbReference>
<dbReference type="GO" id="GO:0008270">
    <property type="term" value="F:zinc ion binding"/>
    <property type="evidence" value="ECO:0007669"/>
    <property type="project" value="UniProtKB-UniRule"/>
</dbReference>
<dbReference type="GO" id="GO:0006355">
    <property type="term" value="P:regulation of DNA-templated transcription"/>
    <property type="evidence" value="ECO:0007669"/>
    <property type="project" value="InterPro"/>
</dbReference>
<dbReference type="Gene3D" id="3.30.50.10">
    <property type="entry name" value="Erythroid Transcription Factor GATA-1, subunit A"/>
    <property type="match status" value="1"/>
</dbReference>
<dbReference type="HAMAP" id="MF_00649">
    <property type="entry name" value="DNA_gyrase_inhibitor_YacG"/>
    <property type="match status" value="1"/>
</dbReference>
<dbReference type="InterPro" id="IPR005584">
    <property type="entry name" value="DNA_gyrase_inhibitor_YacG"/>
</dbReference>
<dbReference type="InterPro" id="IPR013088">
    <property type="entry name" value="Znf_NHR/GATA"/>
</dbReference>
<dbReference type="NCBIfam" id="NF001638">
    <property type="entry name" value="PRK00418.1"/>
    <property type="match status" value="1"/>
</dbReference>
<dbReference type="PANTHER" id="PTHR36150">
    <property type="entry name" value="DNA GYRASE INHIBITOR YACG"/>
    <property type="match status" value="1"/>
</dbReference>
<dbReference type="PANTHER" id="PTHR36150:SF1">
    <property type="entry name" value="DNA GYRASE INHIBITOR YACG"/>
    <property type="match status" value="1"/>
</dbReference>
<dbReference type="Pfam" id="PF03884">
    <property type="entry name" value="YacG"/>
    <property type="match status" value="1"/>
</dbReference>
<dbReference type="SUPFAM" id="SSF57716">
    <property type="entry name" value="Glucocorticoid receptor-like (DNA-binding domain)"/>
    <property type="match status" value="1"/>
</dbReference>
<protein>
    <recommendedName>
        <fullName evidence="1">DNA gyrase inhibitor YacG</fullName>
    </recommendedName>
</protein>
<sequence>MSLKVDCPTCGTPVEWSPLSQFRPFCSDRCRLIDLGEWFSEERSIAGEEHTPSSDTARPQLSAEDLALLEQD</sequence>
<evidence type="ECO:0000255" key="1">
    <source>
        <dbReference type="HAMAP-Rule" id="MF_00649"/>
    </source>
</evidence>
<evidence type="ECO:0000256" key="2">
    <source>
        <dbReference type="SAM" id="MobiDB-lite"/>
    </source>
</evidence>
<feature type="chain" id="PRO_1000212402" description="DNA gyrase inhibitor YacG">
    <location>
        <begin position="1"/>
        <end position="72"/>
    </location>
</feature>
<feature type="region of interest" description="Disordered" evidence="2">
    <location>
        <begin position="44"/>
        <end position="72"/>
    </location>
</feature>
<feature type="binding site" evidence="1">
    <location>
        <position position="7"/>
    </location>
    <ligand>
        <name>Zn(2+)</name>
        <dbReference type="ChEBI" id="CHEBI:29105"/>
    </ligand>
</feature>
<feature type="binding site" evidence="1">
    <location>
        <position position="10"/>
    </location>
    <ligand>
        <name>Zn(2+)</name>
        <dbReference type="ChEBI" id="CHEBI:29105"/>
    </ligand>
</feature>
<feature type="binding site" evidence="1">
    <location>
        <position position="26"/>
    </location>
    <ligand>
        <name>Zn(2+)</name>
        <dbReference type="ChEBI" id="CHEBI:29105"/>
    </ligand>
</feature>
<feature type="binding site" evidence="1">
    <location>
        <position position="30"/>
    </location>
    <ligand>
        <name>Zn(2+)</name>
        <dbReference type="ChEBI" id="CHEBI:29105"/>
    </ligand>
</feature>
<organism>
    <name type="scientific">Tolumonas auensis (strain DSM 9187 / NBRC 110442 / TA 4)</name>
    <dbReference type="NCBI Taxonomy" id="595494"/>
    <lineage>
        <taxon>Bacteria</taxon>
        <taxon>Pseudomonadati</taxon>
        <taxon>Pseudomonadota</taxon>
        <taxon>Gammaproteobacteria</taxon>
        <taxon>Aeromonadales</taxon>
        <taxon>Aeromonadaceae</taxon>
        <taxon>Tolumonas</taxon>
    </lineage>
</organism>
<comment type="function">
    <text evidence="1">Inhibits all the catalytic activities of DNA gyrase by preventing its interaction with DNA. Acts by binding directly to the C-terminal domain of GyrB, which probably disrupts DNA binding by the gyrase.</text>
</comment>
<comment type="cofactor">
    <cofactor evidence="1">
        <name>Zn(2+)</name>
        <dbReference type="ChEBI" id="CHEBI:29105"/>
    </cofactor>
    <text evidence="1">Binds 1 zinc ion.</text>
</comment>
<comment type="subunit">
    <text evidence="1">Interacts with GyrB.</text>
</comment>
<comment type="similarity">
    <text evidence="1">Belongs to the DNA gyrase inhibitor YacG family.</text>
</comment>
<accession>C4LA34</accession>
<name>YACG_TOLAT</name>
<keyword id="KW-0479">Metal-binding</keyword>
<keyword id="KW-1185">Reference proteome</keyword>
<keyword id="KW-0862">Zinc</keyword>
<gene>
    <name evidence="1" type="primary">yacG</name>
    <name type="ordered locus">Tola_0534</name>
</gene>